<keyword id="KW-0030">Aminoacyl-tRNA synthetase</keyword>
<keyword id="KW-0067">ATP-binding</keyword>
<keyword id="KW-0963">Cytoplasm</keyword>
<keyword id="KW-0436">Ligase</keyword>
<keyword id="KW-0479">Metal-binding</keyword>
<keyword id="KW-0547">Nucleotide-binding</keyword>
<keyword id="KW-0648">Protein biosynthesis</keyword>
<keyword id="KW-0694">RNA-binding</keyword>
<keyword id="KW-0820">tRNA-binding</keyword>
<keyword id="KW-0862">Zinc</keyword>
<name>SYA_XANOP</name>
<protein>
    <recommendedName>
        <fullName evidence="1">Alanine--tRNA ligase</fullName>
        <ecNumber evidence="1">6.1.1.7</ecNumber>
    </recommendedName>
    <alternativeName>
        <fullName evidence="1">Alanyl-tRNA synthetase</fullName>
        <shortName evidence="1">AlaRS</shortName>
    </alternativeName>
</protein>
<sequence>MNAPAKFSTSQIRSDFLAFFEGRGHTIVPSAPLVPGNDPTLLFTNSGMVQFKDVFLGAEKRSYVRAADVQRCLRAGGKHNDLDSVGYTARHHTFFEMLGNWSFGDYFKKDAIAWAWELLTQIWKLPTDRLLVTVYHTDEEAFALWRDMIGIPESRIVRIGDNKGAPYASDNFWQMADTGPCGPCTEIFFDHGDHIAGGPPGSPDEDGDRFIEIWNLVFMQFDRQPDGTLVPLPAPCVDTGMGLERLAAILQHVHTNYEIDLFQALIGKASALTGITDLENKSLRVIADHIRACSFLIVDGVLPSNEGRGYVLRRIIRRALRHGWMLGVRQPFFSKMVPTLVELMGEAYPELVVAKDTVARALLAEEERFAETLDAGMKIFDEVASRSQDIIPGADAFRLYDTYGFPVDLTADIARERGMRVDMEGFECAMERQRETARAAGKFGGGVALPADLVASMSPTVFLGYEAYDADALRVVALLKQGRPVERAQAGDEVIVFTDRTPFYAESGGQVGDSGQLNGPGVLIEVADTQKFAGQFHGHVGRISEGTLALGDVLAGGIDVQRRGKTILNHSATHLLHAALREVLGTHVQQKGSLVAPDRLRFDFSHFQPITADELAVIERKVNAEVRTNHGVEVHNMAMQEALDFGAMALFGEKYGENVRVLKMGGYSTELCGGTHVTRTGDIGLFKITSEGGVSSGVRRIEAVTGQGALDYVADEERRLLEAAHLLGGNATEVVDKVRALTERQKRLQRELESLKAKLASGATADLGAAAIDVAGVKVVAVRLEGFDAKALRDAMDRLKQQLGDSVIVLAGASGGKVALVSGVNGSPTGKVKAGELLSNIASQIGGKGGGRPDLAQGGGEDGPALATALDGVPLWVKQHLG</sequence>
<proteinExistence type="inferred from homology"/>
<comment type="function">
    <text evidence="1">Catalyzes the attachment of alanine to tRNA(Ala) in a two-step reaction: alanine is first activated by ATP to form Ala-AMP and then transferred to the acceptor end of tRNA(Ala). Also edits incorrectly charged Ser-tRNA(Ala) and Gly-tRNA(Ala) via its editing domain.</text>
</comment>
<comment type="catalytic activity">
    <reaction evidence="1">
        <text>tRNA(Ala) + L-alanine + ATP = L-alanyl-tRNA(Ala) + AMP + diphosphate</text>
        <dbReference type="Rhea" id="RHEA:12540"/>
        <dbReference type="Rhea" id="RHEA-COMP:9657"/>
        <dbReference type="Rhea" id="RHEA-COMP:9923"/>
        <dbReference type="ChEBI" id="CHEBI:30616"/>
        <dbReference type="ChEBI" id="CHEBI:33019"/>
        <dbReference type="ChEBI" id="CHEBI:57972"/>
        <dbReference type="ChEBI" id="CHEBI:78442"/>
        <dbReference type="ChEBI" id="CHEBI:78497"/>
        <dbReference type="ChEBI" id="CHEBI:456215"/>
        <dbReference type="EC" id="6.1.1.7"/>
    </reaction>
</comment>
<comment type="cofactor">
    <cofactor evidence="1">
        <name>Zn(2+)</name>
        <dbReference type="ChEBI" id="CHEBI:29105"/>
    </cofactor>
    <text evidence="1">Binds 1 zinc ion per subunit.</text>
</comment>
<comment type="subcellular location">
    <subcellularLocation>
        <location evidence="1">Cytoplasm</location>
    </subcellularLocation>
</comment>
<comment type="domain">
    <text evidence="1">Consists of three domains; the N-terminal catalytic domain, the editing domain and the C-terminal C-Ala domain. The editing domain removes incorrectly charged amino acids, while the C-Ala domain, along with tRNA(Ala), serves as a bridge to cooperatively bring together the editing and aminoacylation centers thus stimulating deacylation of misacylated tRNAs.</text>
</comment>
<comment type="similarity">
    <text evidence="1">Belongs to the class-II aminoacyl-tRNA synthetase family.</text>
</comment>
<organism>
    <name type="scientific">Xanthomonas oryzae pv. oryzae (strain PXO99A)</name>
    <dbReference type="NCBI Taxonomy" id="360094"/>
    <lineage>
        <taxon>Bacteria</taxon>
        <taxon>Pseudomonadati</taxon>
        <taxon>Pseudomonadota</taxon>
        <taxon>Gammaproteobacteria</taxon>
        <taxon>Lysobacterales</taxon>
        <taxon>Lysobacteraceae</taxon>
        <taxon>Xanthomonas</taxon>
    </lineage>
</organism>
<dbReference type="EC" id="6.1.1.7" evidence="1"/>
<dbReference type="EMBL" id="CP000967">
    <property type="protein sequence ID" value="ACD58320.1"/>
    <property type="molecule type" value="Genomic_DNA"/>
</dbReference>
<dbReference type="RefSeq" id="WP_011259507.1">
    <property type="nucleotide sequence ID" value="NC_010717.2"/>
</dbReference>
<dbReference type="SMR" id="B2SUD0"/>
<dbReference type="KEGG" id="xop:PXO_00147"/>
<dbReference type="eggNOG" id="COG0013">
    <property type="taxonomic scope" value="Bacteria"/>
</dbReference>
<dbReference type="HOGENOM" id="CLU_004485_1_1_6"/>
<dbReference type="Proteomes" id="UP000001740">
    <property type="component" value="Chromosome"/>
</dbReference>
<dbReference type="GO" id="GO:0005829">
    <property type="term" value="C:cytosol"/>
    <property type="evidence" value="ECO:0007669"/>
    <property type="project" value="TreeGrafter"/>
</dbReference>
<dbReference type="GO" id="GO:0004813">
    <property type="term" value="F:alanine-tRNA ligase activity"/>
    <property type="evidence" value="ECO:0007669"/>
    <property type="project" value="UniProtKB-UniRule"/>
</dbReference>
<dbReference type="GO" id="GO:0002161">
    <property type="term" value="F:aminoacyl-tRNA deacylase activity"/>
    <property type="evidence" value="ECO:0007669"/>
    <property type="project" value="TreeGrafter"/>
</dbReference>
<dbReference type="GO" id="GO:0005524">
    <property type="term" value="F:ATP binding"/>
    <property type="evidence" value="ECO:0007669"/>
    <property type="project" value="UniProtKB-UniRule"/>
</dbReference>
<dbReference type="GO" id="GO:0000049">
    <property type="term" value="F:tRNA binding"/>
    <property type="evidence" value="ECO:0007669"/>
    <property type="project" value="UniProtKB-KW"/>
</dbReference>
<dbReference type="GO" id="GO:0008270">
    <property type="term" value="F:zinc ion binding"/>
    <property type="evidence" value="ECO:0007669"/>
    <property type="project" value="UniProtKB-UniRule"/>
</dbReference>
<dbReference type="GO" id="GO:0006419">
    <property type="term" value="P:alanyl-tRNA aminoacylation"/>
    <property type="evidence" value="ECO:0007669"/>
    <property type="project" value="UniProtKB-UniRule"/>
</dbReference>
<dbReference type="GO" id="GO:0045892">
    <property type="term" value="P:negative regulation of DNA-templated transcription"/>
    <property type="evidence" value="ECO:0007669"/>
    <property type="project" value="TreeGrafter"/>
</dbReference>
<dbReference type="CDD" id="cd00673">
    <property type="entry name" value="AlaRS_core"/>
    <property type="match status" value="1"/>
</dbReference>
<dbReference type="FunFam" id="3.10.310.40:FF:000001">
    <property type="entry name" value="Alanine--tRNA ligase"/>
    <property type="match status" value="1"/>
</dbReference>
<dbReference type="FunFam" id="3.30.54.20:FF:000001">
    <property type="entry name" value="Alanine--tRNA ligase"/>
    <property type="match status" value="1"/>
</dbReference>
<dbReference type="FunFam" id="3.30.930.10:FF:000004">
    <property type="entry name" value="Alanine--tRNA ligase"/>
    <property type="match status" value="1"/>
</dbReference>
<dbReference type="FunFam" id="3.30.980.10:FF:000004">
    <property type="entry name" value="Alanine--tRNA ligase, cytoplasmic"/>
    <property type="match status" value="1"/>
</dbReference>
<dbReference type="Gene3D" id="2.40.30.130">
    <property type="match status" value="1"/>
</dbReference>
<dbReference type="Gene3D" id="3.10.310.40">
    <property type="match status" value="1"/>
</dbReference>
<dbReference type="Gene3D" id="3.30.54.20">
    <property type="match status" value="1"/>
</dbReference>
<dbReference type="Gene3D" id="6.10.250.550">
    <property type="match status" value="1"/>
</dbReference>
<dbReference type="Gene3D" id="3.30.930.10">
    <property type="entry name" value="Bira Bifunctional Protein, Domain 2"/>
    <property type="match status" value="1"/>
</dbReference>
<dbReference type="Gene3D" id="3.30.980.10">
    <property type="entry name" value="Threonyl-trna Synthetase, Chain A, domain 2"/>
    <property type="match status" value="1"/>
</dbReference>
<dbReference type="HAMAP" id="MF_00036_B">
    <property type="entry name" value="Ala_tRNA_synth_B"/>
    <property type="match status" value="1"/>
</dbReference>
<dbReference type="InterPro" id="IPR045864">
    <property type="entry name" value="aa-tRNA-synth_II/BPL/LPL"/>
</dbReference>
<dbReference type="InterPro" id="IPR002318">
    <property type="entry name" value="Ala-tRNA-lgiase_IIc"/>
</dbReference>
<dbReference type="InterPro" id="IPR018162">
    <property type="entry name" value="Ala-tRNA-ligase_IIc_anticod-bd"/>
</dbReference>
<dbReference type="InterPro" id="IPR018165">
    <property type="entry name" value="Ala-tRNA-synth_IIc_core"/>
</dbReference>
<dbReference type="InterPro" id="IPR018164">
    <property type="entry name" value="Ala-tRNA-synth_IIc_N"/>
</dbReference>
<dbReference type="InterPro" id="IPR050058">
    <property type="entry name" value="Ala-tRNA_ligase"/>
</dbReference>
<dbReference type="InterPro" id="IPR023033">
    <property type="entry name" value="Ala_tRNA_ligase_euk/bac"/>
</dbReference>
<dbReference type="InterPro" id="IPR003156">
    <property type="entry name" value="DHHA1_dom"/>
</dbReference>
<dbReference type="InterPro" id="IPR018163">
    <property type="entry name" value="Thr/Ala-tRNA-synth_IIc_edit"/>
</dbReference>
<dbReference type="InterPro" id="IPR009000">
    <property type="entry name" value="Transl_B-barrel_sf"/>
</dbReference>
<dbReference type="InterPro" id="IPR012947">
    <property type="entry name" value="tRNA_SAD"/>
</dbReference>
<dbReference type="NCBIfam" id="TIGR00344">
    <property type="entry name" value="alaS"/>
    <property type="match status" value="1"/>
</dbReference>
<dbReference type="PANTHER" id="PTHR11777:SF9">
    <property type="entry name" value="ALANINE--TRNA LIGASE, CYTOPLASMIC"/>
    <property type="match status" value="1"/>
</dbReference>
<dbReference type="PANTHER" id="PTHR11777">
    <property type="entry name" value="ALANYL-TRNA SYNTHETASE"/>
    <property type="match status" value="1"/>
</dbReference>
<dbReference type="Pfam" id="PF02272">
    <property type="entry name" value="DHHA1"/>
    <property type="match status" value="1"/>
</dbReference>
<dbReference type="Pfam" id="PF01411">
    <property type="entry name" value="tRNA-synt_2c"/>
    <property type="match status" value="1"/>
</dbReference>
<dbReference type="Pfam" id="PF07973">
    <property type="entry name" value="tRNA_SAD"/>
    <property type="match status" value="1"/>
</dbReference>
<dbReference type="PRINTS" id="PR00980">
    <property type="entry name" value="TRNASYNTHALA"/>
</dbReference>
<dbReference type="SMART" id="SM00863">
    <property type="entry name" value="tRNA_SAD"/>
    <property type="match status" value="1"/>
</dbReference>
<dbReference type="SUPFAM" id="SSF55681">
    <property type="entry name" value="Class II aaRS and biotin synthetases"/>
    <property type="match status" value="1"/>
</dbReference>
<dbReference type="SUPFAM" id="SSF101353">
    <property type="entry name" value="Putative anticodon-binding domain of alanyl-tRNA synthetase (AlaRS)"/>
    <property type="match status" value="1"/>
</dbReference>
<dbReference type="SUPFAM" id="SSF55186">
    <property type="entry name" value="ThrRS/AlaRS common domain"/>
    <property type="match status" value="1"/>
</dbReference>
<dbReference type="SUPFAM" id="SSF50447">
    <property type="entry name" value="Translation proteins"/>
    <property type="match status" value="1"/>
</dbReference>
<dbReference type="PROSITE" id="PS50860">
    <property type="entry name" value="AA_TRNA_LIGASE_II_ALA"/>
    <property type="match status" value="1"/>
</dbReference>
<gene>
    <name evidence="1" type="primary">alaS</name>
    <name type="ordered locus">PXO_00147</name>
</gene>
<accession>B2SUD0</accession>
<evidence type="ECO:0000255" key="1">
    <source>
        <dbReference type="HAMAP-Rule" id="MF_00036"/>
    </source>
</evidence>
<feature type="chain" id="PRO_0000347866" description="Alanine--tRNA ligase">
    <location>
        <begin position="1"/>
        <end position="882"/>
    </location>
</feature>
<feature type="binding site" evidence="1">
    <location>
        <position position="570"/>
    </location>
    <ligand>
        <name>Zn(2+)</name>
        <dbReference type="ChEBI" id="CHEBI:29105"/>
    </ligand>
</feature>
<feature type="binding site" evidence="1">
    <location>
        <position position="574"/>
    </location>
    <ligand>
        <name>Zn(2+)</name>
        <dbReference type="ChEBI" id="CHEBI:29105"/>
    </ligand>
</feature>
<feature type="binding site" evidence="1">
    <location>
        <position position="672"/>
    </location>
    <ligand>
        <name>Zn(2+)</name>
        <dbReference type="ChEBI" id="CHEBI:29105"/>
    </ligand>
</feature>
<feature type="binding site" evidence="1">
    <location>
        <position position="676"/>
    </location>
    <ligand>
        <name>Zn(2+)</name>
        <dbReference type="ChEBI" id="CHEBI:29105"/>
    </ligand>
</feature>
<reference key="1">
    <citation type="journal article" date="2008" name="BMC Genomics">
        <title>Genome sequence and rapid evolution of the rice pathogen Xanthomonas oryzae pv. oryzae PXO99A.</title>
        <authorList>
            <person name="Salzberg S.L."/>
            <person name="Sommer D.D."/>
            <person name="Schatz M.C."/>
            <person name="Phillippy A.M."/>
            <person name="Rabinowicz P.D."/>
            <person name="Tsuge S."/>
            <person name="Furutani A."/>
            <person name="Ochiai H."/>
            <person name="Delcher A.L."/>
            <person name="Kelley D."/>
            <person name="Madupu R."/>
            <person name="Puiu D."/>
            <person name="Radune D."/>
            <person name="Shumway M."/>
            <person name="Trapnell C."/>
            <person name="Aparna G."/>
            <person name="Jha G."/>
            <person name="Pandey A."/>
            <person name="Patil P.B."/>
            <person name="Ishihara H."/>
            <person name="Meyer D.F."/>
            <person name="Szurek B."/>
            <person name="Verdier V."/>
            <person name="Koebnik R."/>
            <person name="Dow J.M."/>
            <person name="Ryan R.P."/>
            <person name="Hirata H."/>
            <person name="Tsuyumu S."/>
            <person name="Won Lee S."/>
            <person name="Seo Y.-S."/>
            <person name="Sriariyanum M."/>
            <person name="Ronald P.C."/>
            <person name="Sonti R.V."/>
            <person name="Van Sluys M.-A."/>
            <person name="Leach J.E."/>
            <person name="White F.F."/>
            <person name="Bogdanove A.J."/>
        </authorList>
    </citation>
    <scope>NUCLEOTIDE SEQUENCE [LARGE SCALE GENOMIC DNA]</scope>
    <source>
        <strain>PXO99A</strain>
    </source>
</reference>